<keyword id="KW-1185">Reference proteome</keyword>
<keyword id="KW-0687">Ribonucleoprotein</keyword>
<keyword id="KW-0689">Ribosomal protein</keyword>
<feature type="chain" id="PRO_1000193909" description="Large ribosomal subunit protein bL19">
    <location>
        <begin position="1"/>
        <end position="123"/>
    </location>
</feature>
<comment type="function">
    <text evidence="1">This protein is located at the 30S-50S ribosomal subunit interface and may play a role in the structure and function of the aminoacyl-tRNA binding site.</text>
</comment>
<comment type="similarity">
    <text evidence="1">Belongs to the bacterial ribosomal protein bL19 family.</text>
</comment>
<organism>
    <name type="scientific">Thermomicrobium roseum (strain ATCC 27502 / DSM 5159 / P-2)</name>
    <dbReference type="NCBI Taxonomy" id="309801"/>
    <lineage>
        <taxon>Bacteria</taxon>
        <taxon>Pseudomonadati</taxon>
        <taxon>Thermomicrobiota</taxon>
        <taxon>Thermomicrobia</taxon>
        <taxon>Thermomicrobiales</taxon>
        <taxon>Thermomicrobiaceae</taxon>
        <taxon>Thermomicrobium</taxon>
    </lineage>
</organism>
<dbReference type="EMBL" id="CP001275">
    <property type="protein sequence ID" value="ACM05322.1"/>
    <property type="molecule type" value="Genomic_DNA"/>
</dbReference>
<dbReference type="RefSeq" id="WP_015922002.1">
    <property type="nucleotide sequence ID" value="NC_011959.1"/>
</dbReference>
<dbReference type="SMR" id="B9L044"/>
<dbReference type="STRING" id="309801.trd_1048"/>
<dbReference type="KEGG" id="tro:trd_1048"/>
<dbReference type="eggNOG" id="COG0335">
    <property type="taxonomic scope" value="Bacteria"/>
</dbReference>
<dbReference type="HOGENOM" id="CLU_103507_2_1_0"/>
<dbReference type="OrthoDB" id="9803541at2"/>
<dbReference type="Proteomes" id="UP000000447">
    <property type="component" value="Chromosome"/>
</dbReference>
<dbReference type="GO" id="GO:0022625">
    <property type="term" value="C:cytosolic large ribosomal subunit"/>
    <property type="evidence" value="ECO:0007669"/>
    <property type="project" value="TreeGrafter"/>
</dbReference>
<dbReference type="GO" id="GO:0003735">
    <property type="term" value="F:structural constituent of ribosome"/>
    <property type="evidence" value="ECO:0007669"/>
    <property type="project" value="InterPro"/>
</dbReference>
<dbReference type="GO" id="GO:0006412">
    <property type="term" value="P:translation"/>
    <property type="evidence" value="ECO:0007669"/>
    <property type="project" value="UniProtKB-UniRule"/>
</dbReference>
<dbReference type="FunFam" id="2.30.30.790:FF:000001">
    <property type="entry name" value="50S ribosomal protein L19"/>
    <property type="match status" value="1"/>
</dbReference>
<dbReference type="Gene3D" id="2.30.30.790">
    <property type="match status" value="1"/>
</dbReference>
<dbReference type="HAMAP" id="MF_00402">
    <property type="entry name" value="Ribosomal_bL19"/>
    <property type="match status" value="1"/>
</dbReference>
<dbReference type="InterPro" id="IPR001857">
    <property type="entry name" value="Ribosomal_bL19"/>
</dbReference>
<dbReference type="InterPro" id="IPR018257">
    <property type="entry name" value="Ribosomal_bL19_CS"/>
</dbReference>
<dbReference type="InterPro" id="IPR038657">
    <property type="entry name" value="Ribosomal_bL19_sf"/>
</dbReference>
<dbReference type="InterPro" id="IPR008991">
    <property type="entry name" value="Translation_prot_SH3-like_sf"/>
</dbReference>
<dbReference type="NCBIfam" id="TIGR01024">
    <property type="entry name" value="rplS_bact"/>
    <property type="match status" value="1"/>
</dbReference>
<dbReference type="PANTHER" id="PTHR15680:SF9">
    <property type="entry name" value="LARGE RIBOSOMAL SUBUNIT PROTEIN BL19M"/>
    <property type="match status" value="1"/>
</dbReference>
<dbReference type="PANTHER" id="PTHR15680">
    <property type="entry name" value="RIBOSOMAL PROTEIN L19"/>
    <property type="match status" value="1"/>
</dbReference>
<dbReference type="Pfam" id="PF01245">
    <property type="entry name" value="Ribosomal_L19"/>
    <property type="match status" value="1"/>
</dbReference>
<dbReference type="PIRSF" id="PIRSF002191">
    <property type="entry name" value="Ribosomal_L19"/>
    <property type="match status" value="1"/>
</dbReference>
<dbReference type="PRINTS" id="PR00061">
    <property type="entry name" value="RIBOSOMALL19"/>
</dbReference>
<dbReference type="SUPFAM" id="SSF50104">
    <property type="entry name" value="Translation proteins SH3-like domain"/>
    <property type="match status" value="1"/>
</dbReference>
<dbReference type="PROSITE" id="PS01015">
    <property type="entry name" value="RIBOSOMAL_L19"/>
    <property type="match status" value="1"/>
</dbReference>
<sequence length="123" mass="14164">MQDLIRSVQQEYMRSDLPPFSPGDTVRVHYRVVEGGNVRVQPFEGVVIRKRGGGTDATFTVRRVAAHGVGVERTFPLHSPLIEKIEVLRHGKVRRARLYYLRERAGKAARLKERRRPEGSYLR</sequence>
<evidence type="ECO:0000255" key="1">
    <source>
        <dbReference type="HAMAP-Rule" id="MF_00402"/>
    </source>
</evidence>
<evidence type="ECO:0000305" key="2"/>
<proteinExistence type="inferred from homology"/>
<gene>
    <name evidence="1" type="primary">rplS</name>
    <name type="ordered locus">trd_1048</name>
</gene>
<accession>B9L044</accession>
<name>RL19_THERP</name>
<protein>
    <recommendedName>
        <fullName evidence="1">Large ribosomal subunit protein bL19</fullName>
    </recommendedName>
    <alternativeName>
        <fullName evidence="2">50S ribosomal protein L19</fullName>
    </alternativeName>
</protein>
<reference key="1">
    <citation type="journal article" date="2009" name="PLoS ONE">
        <title>Complete genome sequence of the aerobic CO-oxidizing thermophile Thermomicrobium roseum.</title>
        <authorList>
            <person name="Wu D."/>
            <person name="Raymond J."/>
            <person name="Wu M."/>
            <person name="Chatterji S."/>
            <person name="Ren Q."/>
            <person name="Graham J.E."/>
            <person name="Bryant D.A."/>
            <person name="Robb F."/>
            <person name="Colman A."/>
            <person name="Tallon L.J."/>
            <person name="Badger J.H."/>
            <person name="Madupu R."/>
            <person name="Ward N.L."/>
            <person name="Eisen J.A."/>
        </authorList>
    </citation>
    <scope>NUCLEOTIDE SEQUENCE [LARGE SCALE GENOMIC DNA]</scope>
    <source>
        <strain>ATCC 27502 / DSM 5159 / P-2</strain>
    </source>
</reference>